<comment type="similarity">
    <text evidence="1">Belongs to the UPF0270 family.</text>
</comment>
<name>Y3952_YERE8</name>
<evidence type="ECO:0000255" key="1">
    <source>
        <dbReference type="HAMAP-Rule" id="MF_00690"/>
    </source>
</evidence>
<organism>
    <name type="scientific">Yersinia enterocolitica serotype O:8 / biotype 1B (strain NCTC 13174 / 8081)</name>
    <dbReference type="NCBI Taxonomy" id="393305"/>
    <lineage>
        <taxon>Bacteria</taxon>
        <taxon>Pseudomonadati</taxon>
        <taxon>Pseudomonadota</taxon>
        <taxon>Gammaproteobacteria</taxon>
        <taxon>Enterobacterales</taxon>
        <taxon>Yersiniaceae</taxon>
        <taxon>Yersinia</taxon>
    </lineage>
</organism>
<dbReference type="EMBL" id="AM286415">
    <property type="protein sequence ID" value="CAL13971.1"/>
    <property type="molecule type" value="Genomic_DNA"/>
</dbReference>
<dbReference type="RefSeq" id="WP_005174667.1">
    <property type="nucleotide sequence ID" value="NC_008800.1"/>
</dbReference>
<dbReference type="RefSeq" id="YP_001008097.1">
    <property type="nucleotide sequence ID" value="NC_008800.1"/>
</dbReference>
<dbReference type="SMR" id="A1JS94"/>
<dbReference type="KEGG" id="yen:YE3952"/>
<dbReference type="PATRIC" id="fig|393305.7.peg.4204"/>
<dbReference type="eggNOG" id="COG3089">
    <property type="taxonomic scope" value="Bacteria"/>
</dbReference>
<dbReference type="HOGENOM" id="CLU_186759_1_0_6"/>
<dbReference type="OrthoDB" id="6120729at2"/>
<dbReference type="Proteomes" id="UP000000642">
    <property type="component" value="Chromosome"/>
</dbReference>
<dbReference type="Gene3D" id="1.10.10.610">
    <property type="entry name" value="YehU-like"/>
    <property type="match status" value="1"/>
</dbReference>
<dbReference type="HAMAP" id="MF_00690">
    <property type="entry name" value="UPF0270"/>
    <property type="match status" value="1"/>
</dbReference>
<dbReference type="InterPro" id="IPR010648">
    <property type="entry name" value="UPF0270"/>
</dbReference>
<dbReference type="InterPro" id="IPR036685">
    <property type="entry name" value="YehU-like_sf"/>
</dbReference>
<dbReference type="NCBIfam" id="NF003438">
    <property type="entry name" value="PRK04966.1"/>
    <property type="match status" value="1"/>
</dbReference>
<dbReference type="Pfam" id="PF06794">
    <property type="entry name" value="UPF0270"/>
    <property type="match status" value="1"/>
</dbReference>
<dbReference type="PIRSF" id="PIRSF006169">
    <property type="entry name" value="UCP006169"/>
    <property type="match status" value="1"/>
</dbReference>
<dbReference type="SUPFAM" id="SSF118001">
    <property type="entry name" value="YehU-like"/>
    <property type="match status" value="1"/>
</dbReference>
<feature type="chain" id="PRO_1000045180" description="UPF0270 protein YE3952">
    <location>
        <begin position="1"/>
        <end position="78"/>
    </location>
</feature>
<sequence>MIIPWQQVDSETLDNLLEAFVLREGTDYGEHERSLEQKVEDVRRQLVSGEAVLVWSELHETINIMPRGAFRAGAEELP</sequence>
<reference key="1">
    <citation type="journal article" date="2006" name="PLoS Genet.">
        <title>The complete genome sequence and comparative genome analysis of the high pathogenicity Yersinia enterocolitica strain 8081.</title>
        <authorList>
            <person name="Thomson N.R."/>
            <person name="Howard S."/>
            <person name="Wren B.W."/>
            <person name="Holden M.T.G."/>
            <person name="Crossman L."/>
            <person name="Challis G.L."/>
            <person name="Churcher C."/>
            <person name="Mungall K."/>
            <person name="Brooks K."/>
            <person name="Chillingworth T."/>
            <person name="Feltwell T."/>
            <person name="Abdellah Z."/>
            <person name="Hauser H."/>
            <person name="Jagels K."/>
            <person name="Maddison M."/>
            <person name="Moule S."/>
            <person name="Sanders M."/>
            <person name="Whitehead S."/>
            <person name="Quail M.A."/>
            <person name="Dougan G."/>
            <person name="Parkhill J."/>
            <person name="Prentice M.B."/>
        </authorList>
    </citation>
    <scope>NUCLEOTIDE SEQUENCE [LARGE SCALE GENOMIC DNA]</scope>
    <source>
        <strain>NCTC 13174 / 8081</strain>
    </source>
</reference>
<proteinExistence type="inferred from homology"/>
<protein>
    <recommendedName>
        <fullName evidence="1">UPF0270 protein YE3952</fullName>
    </recommendedName>
</protein>
<accession>A1JS94</accession>
<gene>
    <name type="ordered locus">YE3952</name>
</gene>